<geneLocation type="plasmid">
    <name>pIB1</name>
</geneLocation>
<geneLocation type="plasmid">
    <name>pYV</name>
</geneLocation>
<protein>
    <recommendedName>
        <fullName>Protein kinase YpkA</fullName>
        <shortName>Protein kinase A</shortName>
        <ecNumber>2.7.11.1</ecNumber>
    </recommendedName>
    <alternativeName>
        <fullName>Targeted effector protein kinase</fullName>
    </alternativeName>
</protein>
<sequence>MKSVKIMGTMPPSISLAKAHERISQHWQNPVGELNIGGKRYRIIDNQVLRLNPHSGFSLFREGVGKIFSGKMFNFSIARNLTDTLHAAQKTTSQELRSDIPNALSNLFGAKPQTELPLGWKGEPLSGAPDLEGMRVAETDKFAEGESHISIIETKDKQRLVAKIERSIAEGHLFAELEAYKHIYKTAGKHPNLANVHGMAVVPYGNRKEEALLMDEVDGWRCSDTLRTLADSWKQGKINSEAYWGTIKFIAHRLLDVTNHLAKAGVVHNDIKPGNVVFDRASGEPVVIDLGLHSRSGEQPKGFTESFKAPELGVGNLGASEKSDVFLVVSTLLHCIEGFEKNPEIKPNQGLRFITSEPAHVMDENGYPIHRPGIAGVETAYTRFITDILGVSADSRPDSNEARLHEFLSDGTIDEESAKQILKDTLTGEMSPLSTDVRRITPKKLRELSDLLRTHLSSAATKQLDMGGVLSDLDTMLVALDKAEREGGVDKDQLKSFNSLILKTYRVIEDYVKGREGDTKNSSTEVSPYHRSNFMLSIVEPSLQRIQKHLDQTHSFSDIGSLVRAHKHLETLLEVLVTLSQQGQPVSSETYGFLNRLAEAKITLSQQLNTLQQQQESAKAQLSILINRSGSWADVARQSLQRFDSTRPVVKFGTEQYTAIHRQMMAAHAAITLQEVSEFTDDMRNFTVDSIPLLIQLGRSSLMDEHLVEQREKLRELTTIAERLNRLEREWM</sequence>
<evidence type="ECO:0000255" key="1"/>
<evidence type="ECO:0000255" key="2">
    <source>
        <dbReference type="PROSITE-ProRule" id="PRU00159"/>
    </source>
</evidence>
<evidence type="ECO:0000255" key="3">
    <source>
        <dbReference type="PROSITE-ProRule" id="PRU10027"/>
    </source>
</evidence>
<evidence type="ECO:0000269" key="4">
    <source>
    </source>
</evidence>
<evidence type="ECO:0000269" key="5">
    <source>
    </source>
</evidence>
<evidence type="ECO:0000269" key="6">
    <source>
    </source>
</evidence>
<evidence type="ECO:0000305" key="7"/>
<evidence type="ECO:0007829" key="8">
    <source>
        <dbReference type="PDB" id="2H7O"/>
    </source>
</evidence>
<evidence type="ECO:0007829" key="9">
    <source>
        <dbReference type="PDB" id="2H7V"/>
    </source>
</evidence>
<accession>Q05608</accession>
<accession>Q663G6</accession>
<feature type="signal peptide" evidence="1">
    <location>
        <begin position="1"/>
        <end status="unknown"/>
    </location>
</feature>
<feature type="chain" id="PRO_0000024392" description="Protein kinase YpkA">
    <location>
        <begin status="unknown"/>
        <end position="732"/>
    </location>
</feature>
<feature type="domain" description="Protein kinase" evidence="2">
    <location>
        <begin position="136"/>
        <end position="408"/>
    </location>
</feature>
<feature type="active site" description="Proton acceptor" evidence="2 3">
    <location>
        <position position="270"/>
    </location>
</feature>
<feature type="binding site" evidence="2">
    <location>
        <begin position="142"/>
        <end position="150"/>
    </location>
    <ligand>
        <name>ATP</name>
        <dbReference type="ChEBI" id="CHEBI:30616"/>
    </ligand>
</feature>
<feature type="binding site" evidence="2">
    <location>
        <position position="163"/>
    </location>
    <ligand>
        <name>ATP</name>
        <dbReference type="ChEBI" id="CHEBI:30616"/>
    </ligand>
</feature>
<feature type="sequence conflict" description="In Ref. 1 and 2." evidence="7" ref="1 2">
    <original>H</original>
    <variation>N</variation>
    <location>
        <position position="566"/>
    </location>
</feature>
<feature type="helix" evidence="8">
    <location>
        <begin position="442"/>
        <end position="460"/>
    </location>
</feature>
<feature type="helix" evidence="8">
    <location>
        <begin position="466"/>
        <end position="485"/>
    </location>
</feature>
<feature type="helix" evidence="8">
    <location>
        <begin position="491"/>
        <end position="513"/>
    </location>
</feature>
<feature type="helix" evidence="8">
    <location>
        <begin position="534"/>
        <end position="537"/>
    </location>
</feature>
<feature type="helix" evidence="8">
    <location>
        <begin position="539"/>
        <end position="547"/>
    </location>
</feature>
<feature type="helix" evidence="8">
    <location>
        <begin position="548"/>
        <end position="551"/>
    </location>
</feature>
<feature type="helix" evidence="8">
    <location>
        <begin position="556"/>
        <end position="558"/>
    </location>
</feature>
<feature type="helix" evidence="8">
    <location>
        <begin position="559"/>
        <end position="580"/>
    </location>
</feature>
<feature type="strand" evidence="9">
    <location>
        <begin position="583"/>
        <end position="585"/>
    </location>
</feature>
<feature type="helix" evidence="8">
    <location>
        <begin position="588"/>
        <end position="628"/>
    </location>
</feature>
<feature type="helix" evidence="8">
    <location>
        <begin position="629"/>
        <end position="631"/>
    </location>
</feature>
<feature type="helix" evidence="8">
    <location>
        <begin position="633"/>
        <end position="646"/>
    </location>
</feature>
<feature type="helix" evidence="8">
    <location>
        <begin position="656"/>
        <end position="658"/>
    </location>
</feature>
<feature type="helix" evidence="8">
    <location>
        <begin position="659"/>
        <end position="676"/>
    </location>
</feature>
<feature type="helix" evidence="8">
    <location>
        <begin position="677"/>
        <end position="679"/>
    </location>
</feature>
<feature type="helix" evidence="8">
    <location>
        <begin position="680"/>
        <end position="697"/>
    </location>
</feature>
<feature type="helix" evidence="8">
    <location>
        <begin position="705"/>
        <end position="730"/>
    </location>
</feature>
<organism>
    <name type="scientific">Yersinia pseudotuberculosis serotype I (strain IP32953)</name>
    <dbReference type="NCBI Taxonomy" id="273123"/>
    <lineage>
        <taxon>Bacteria</taxon>
        <taxon>Pseudomonadati</taxon>
        <taxon>Pseudomonadota</taxon>
        <taxon>Gammaproteobacteria</taxon>
        <taxon>Enterobacterales</taxon>
        <taxon>Yersiniaceae</taxon>
        <taxon>Yersinia</taxon>
    </lineage>
</organism>
<comment type="function">
    <text evidence="4 5">Acts as a virulence determinant.</text>
</comment>
<comment type="catalytic activity">
    <reaction>
        <text>L-seryl-[protein] + ATP = O-phospho-L-seryl-[protein] + ADP + H(+)</text>
        <dbReference type="Rhea" id="RHEA:17989"/>
        <dbReference type="Rhea" id="RHEA-COMP:9863"/>
        <dbReference type="Rhea" id="RHEA-COMP:11604"/>
        <dbReference type="ChEBI" id="CHEBI:15378"/>
        <dbReference type="ChEBI" id="CHEBI:29999"/>
        <dbReference type="ChEBI" id="CHEBI:30616"/>
        <dbReference type="ChEBI" id="CHEBI:83421"/>
        <dbReference type="ChEBI" id="CHEBI:456216"/>
        <dbReference type="EC" id="2.7.11.1"/>
    </reaction>
</comment>
<comment type="catalytic activity">
    <reaction>
        <text>L-threonyl-[protein] + ATP = O-phospho-L-threonyl-[protein] + ADP + H(+)</text>
        <dbReference type="Rhea" id="RHEA:46608"/>
        <dbReference type="Rhea" id="RHEA-COMP:11060"/>
        <dbReference type="Rhea" id="RHEA-COMP:11605"/>
        <dbReference type="ChEBI" id="CHEBI:15378"/>
        <dbReference type="ChEBI" id="CHEBI:30013"/>
        <dbReference type="ChEBI" id="CHEBI:30616"/>
        <dbReference type="ChEBI" id="CHEBI:61977"/>
        <dbReference type="ChEBI" id="CHEBI:456216"/>
        <dbReference type="EC" id="2.7.11.1"/>
    </reaction>
</comment>
<comment type="subcellular location">
    <subcellularLocation>
        <location evidence="6">Secreted</location>
    </subcellularLocation>
</comment>
<comment type="similarity">
    <text evidence="2">Belongs to the protein kinase superfamily. Ser/Thr protein kinase family.</text>
</comment>
<name>YPKA_YERPS</name>
<reference key="1">
    <citation type="journal article" date="1993" name="Nature">
        <title>A secreted protein kinase of Yersinia pseudotuberculosis is an indispensable virulence determinant.</title>
        <authorList>
            <person name="Galyov E.E."/>
            <person name="Haakansson S."/>
            <person name="Forsberg A."/>
            <person name="Wolf-Watz H."/>
        </authorList>
    </citation>
    <scope>NUCLEOTIDE SEQUENCE [GENOMIC DNA]</scope>
    <source>
        <strain>YPIII / Serotype O:3</strain>
        <plasmid>pIB1</plasmid>
    </source>
</reference>
<reference key="2">
    <citation type="journal article" date="1994" name="J. Bacteriol.">
        <title>Characterization of the operon encoding the YpkA Ser/Thr protein kinase and the YopJ protein of Yersinia pseudotuberculosis.</title>
        <authorList>
            <person name="Galyov E.E."/>
            <person name="Haakansson S."/>
            <person name="Wolf-Watz H."/>
        </authorList>
    </citation>
    <scope>NUCLEOTIDE SEQUENCE [GENOMIC DNA]</scope>
    <source>
        <strain>YPIII / Serotype O:3</strain>
        <plasmid>pIB1</plasmid>
    </source>
</reference>
<reference key="3">
    <citation type="journal article" date="2004" name="Proc. Natl. Acad. Sci. U.S.A.">
        <title>Insights into the evolution of Yersinia pestis through whole-genome comparison with Yersinia pseudotuberculosis.</title>
        <authorList>
            <person name="Chain P.S.G."/>
            <person name="Carniel E."/>
            <person name="Larimer F.W."/>
            <person name="Lamerdin J."/>
            <person name="Stoutland P.O."/>
            <person name="Regala W.M."/>
            <person name="Georgescu A.M."/>
            <person name="Vergez L.M."/>
            <person name="Land M.L."/>
            <person name="Motin V.L."/>
            <person name="Brubaker R.R."/>
            <person name="Fowler J."/>
            <person name="Hinnebusch J."/>
            <person name="Marceau M."/>
            <person name="Medigue C."/>
            <person name="Simonet M."/>
            <person name="Chenal-Francisque V."/>
            <person name="Souza B."/>
            <person name="Dacheux D."/>
            <person name="Elliott J.M."/>
            <person name="Derbise A."/>
            <person name="Hauser L.J."/>
            <person name="Garcia E."/>
        </authorList>
    </citation>
    <scope>NUCLEOTIDE SEQUENCE [LARGE SCALE GENOMIC DNA]</scope>
    <source>
        <strain>IP32953</strain>
        <plasmid>pYV</plasmid>
    </source>
</reference>
<reference key="4">
    <citation type="journal article" date="1996" name="Mol. Microbiol.">
        <title>The Yersinia YpkA Ser/Thr kinase is translocated and subsequently targeted to the inner surface of the HeLa cell plasma membrane.</title>
        <authorList>
            <person name="Hakansson S."/>
            <person name="Galyov E.E."/>
            <person name="Rosqvist R."/>
            <person name="Wolf-Watz H."/>
        </authorList>
    </citation>
    <scope>SUBCELLULAR LOCATION</scope>
</reference>
<reference key="5">
    <citation type="journal article" date="2000" name="Proc. Natl. Acad. Sci. U.S.A.">
        <title>A distinctive role for the Yersinia protein kinase: actin binding, kinase activation, and cytoskeleton disruption.</title>
        <authorList>
            <person name="Juris S.J."/>
            <person name="Rudolph A.E."/>
            <person name="Huddler D."/>
            <person name="Orth K."/>
            <person name="Dixon J.E."/>
        </authorList>
    </citation>
    <scope>FUNCTION</scope>
</reference>
<reference key="6">
    <citation type="journal article" date="2007" name="Mol. Cell">
        <title>Identification of a molecular target for the Yersinia protein kinase A.</title>
        <authorList>
            <person name="Navarro L."/>
            <person name="Koller A."/>
            <person name="Nordfelth R."/>
            <person name="Wolf-Watz H."/>
            <person name="Taylor S."/>
            <person name="Dixon J.E."/>
        </authorList>
    </citation>
    <scope>FUNCTION</scope>
</reference>
<reference key="7">
    <citation type="journal article" date="2006" name="Cell">
        <title>Yersinia virulence depends on mimicry of host Rho-family nucleotide dissociation inhibitors.</title>
        <authorList>
            <person name="Prehna G."/>
            <person name="Ivanov M.I."/>
            <person name="Bliska J.B."/>
            <person name="Stebbins C.E."/>
        </authorList>
    </citation>
    <scope>X-RAY CRYSTALLOGRAPHY (2.0 ANGSTROMS) OF 434-732</scope>
</reference>
<proteinExistence type="evidence at protein level"/>
<dbReference type="EC" id="2.7.11.1"/>
<dbReference type="EMBL" id="X69439">
    <property type="protein sequence ID" value="CAA49215.1"/>
    <property type="molecule type" value="Genomic_DNA"/>
</dbReference>
<dbReference type="EMBL" id="L33833">
    <property type="protein sequence ID" value="AAA68487.1"/>
    <property type="molecule type" value="Genomic_DNA"/>
</dbReference>
<dbReference type="EMBL" id="BX936399">
    <property type="protein sequence ID" value="CAF25344.1"/>
    <property type="molecule type" value="Genomic_DNA"/>
</dbReference>
<dbReference type="PIR" id="S30060">
    <property type="entry name" value="S30060"/>
</dbReference>
<dbReference type="RefSeq" id="WP_011191359.1">
    <property type="nucleotide sequence ID" value="NC_006153.2"/>
</dbReference>
<dbReference type="PDB" id="2H7O">
    <property type="method" value="X-ray"/>
    <property type="resolution" value="2.00 A"/>
    <property type="chains" value="A=434-732"/>
</dbReference>
<dbReference type="PDB" id="2H7V">
    <property type="method" value="X-ray"/>
    <property type="resolution" value="2.60 A"/>
    <property type="chains" value="C/D=434-732"/>
</dbReference>
<dbReference type="PDBsum" id="2H7O"/>
<dbReference type="PDBsum" id="2H7V"/>
<dbReference type="SMR" id="Q05608"/>
<dbReference type="IntAct" id="Q05608">
    <property type="interactions" value="1"/>
</dbReference>
<dbReference type="MINT" id="Q05608"/>
<dbReference type="KEGG" id="ypo:BZ17_4237"/>
<dbReference type="KEGG" id="yps:pYV0001"/>
<dbReference type="PATRIC" id="fig|273123.14.peg.4471"/>
<dbReference type="EvolutionaryTrace" id="Q05608"/>
<dbReference type="Proteomes" id="UP000001011">
    <property type="component" value="Plasmid pYV"/>
</dbReference>
<dbReference type="GO" id="GO:0005737">
    <property type="term" value="C:cytoplasm"/>
    <property type="evidence" value="ECO:0007669"/>
    <property type="project" value="TreeGrafter"/>
</dbReference>
<dbReference type="GO" id="GO:0005576">
    <property type="term" value="C:extracellular region"/>
    <property type="evidence" value="ECO:0007669"/>
    <property type="project" value="UniProtKB-SubCell"/>
</dbReference>
<dbReference type="GO" id="GO:0005524">
    <property type="term" value="F:ATP binding"/>
    <property type="evidence" value="ECO:0007669"/>
    <property type="project" value="UniProtKB-KW"/>
</dbReference>
<dbReference type="GO" id="GO:0106310">
    <property type="term" value="F:protein serine kinase activity"/>
    <property type="evidence" value="ECO:0007669"/>
    <property type="project" value="RHEA"/>
</dbReference>
<dbReference type="GO" id="GO:0004674">
    <property type="term" value="F:protein serine/threonine kinase activity"/>
    <property type="evidence" value="ECO:0007669"/>
    <property type="project" value="UniProtKB-KW"/>
</dbReference>
<dbReference type="Gene3D" id="1.20.58.1230">
    <property type="entry name" value="Rac1-binding domain, C-terminal subdomain"/>
    <property type="match status" value="1"/>
</dbReference>
<dbReference type="Gene3D" id="1.20.120.1330">
    <property type="entry name" value="Rac1-binding domain, N-terminal GTPase binding subdomain"/>
    <property type="match status" value="1"/>
</dbReference>
<dbReference type="Gene3D" id="1.10.510.10">
    <property type="entry name" value="Transferase(Phosphotransferase) domain 1"/>
    <property type="match status" value="1"/>
</dbReference>
<dbReference type="InterPro" id="IPR011009">
    <property type="entry name" value="Kinase-like_dom_sf"/>
</dbReference>
<dbReference type="InterPro" id="IPR000719">
    <property type="entry name" value="Prot_kinase_dom"/>
</dbReference>
<dbReference type="InterPro" id="IPR043119">
    <property type="entry name" value="Rac1-bd_C"/>
</dbReference>
<dbReference type="InterPro" id="IPR019093">
    <property type="entry name" value="Rac1-binding_domain"/>
</dbReference>
<dbReference type="InterPro" id="IPR043120">
    <property type="entry name" value="Rac1-db_N"/>
</dbReference>
<dbReference type="InterPro" id="IPR008271">
    <property type="entry name" value="Ser/Thr_kinase_AS"/>
</dbReference>
<dbReference type="InterPro" id="IPR003547">
    <property type="entry name" value="Ser/thr_kinase_yersinia-type"/>
</dbReference>
<dbReference type="PANTHER" id="PTHR44167">
    <property type="entry name" value="OVARIAN-SPECIFIC SERINE/THREONINE-PROTEIN KINASE LOK-RELATED"/>
    <property type="match status" value="1"/>
</dbReference>
<dbReference type="PANTHER" id="PTHR44167:SF31">
    <property type="entry name" value="PROTEIN CBG02007"/>
    <property type="match status" value="1"/>
</dbReference>
<dbReference type="Pfam" id="PF00069">
    <property type="entry name" value="Pkinase"/>
    <property type="match status" value="1"/>
</dbReference>
<dbReference type="Pfam" id="PF09632">
    <property type="entry name" value="Rac1"/>
    <property type="match status" value="1"/>
</dbReference>
<dbReference type="PRINTS" id="PR01373">
    <property type="entry name" value="YERSSTKINASE"/>
</dbReference>
<dbReference type="SMART" id="SM00220">
    <property type="entry name" value="S_TKc"/>
    <property type="match status" value="1"/>
</dbReference>
<dbReference type="SUPFAM" id="SSF56112">
    <property type="entry name" value="Protein kinase-like (PK-like)"/>
    <property type="match status" value="1"/>
</dbReference>
<dbReference type="PROSITE" id="PS50011">
    <property type="entry name" value="PROTEIN_KINASE_DOM"/>
    <property type="match status" value="1"/>
</dbReference>
<dbReference type="PROSITE" id="PS00108">
    <property type="entry name" value="PROTEIN_KINASE_ST"/>
    <property type="match status" value="1"/>
</dbReference>
<gene>
    <name type="primary">ypkA</name>
    <name type="ordered locus">pYV0001</name>
</gene>
<keyword id="KW-0002">3D-structure</keyword>
<keyword id="KW-0067">ATP-binding</keyword>
<keyword id="KW-0418">Kinase</keyword>
<keyword id="KW-0547">Nucleotide-binding</keyword>
<keyword id="KW-0614">Plasmid</keyword>
<keyword id="KW-0964">Secreted</keyword>
<keyword id="KW-0723">Serine/threonine-protein kinase</keyword>
<keyword id="KW-0732">Signal</keyword>
<keyword id="KW-0808">Transferase</keyword>
<keyword id="KW-0843">Virulence</keyword>